<name>CAHM6_RAT</name>
<organism>
    <name type="scientific">Rattus norvegicus</name>
    <name type="common">Rat</name>
    <dbReference type="NCBI Taxonomy" id="10116"/>
    <lineage>
        <taxon>Eukaryota</taxon>
        <taxon>Metazoa</taxon>
        <taxon>Chordata</taxon>
        <taxon>Craniata</taxon>
        <taxon>Vertebrata</taxon>
        <taxon>Euteleostomi</taxon>
        <taxon>Mammalia</taxon>
        <taxon>Eutheria</taxon>
        <taxon>Euarchontoglires</taxon>
        <taxon>Glires</taxon>
        <taxon>Rodentia</taxon>
        <taxon>Myomorpha</taxon>
        <taxon>Muroidea</taxon>
        <taxon>Muridae</taxon>
        <taxon>Murinae</taxon>
        <taxon>Rattus</taxon>
    </lineage>
</organism>
<comment type="function">
    <text evidence="1 2">Pore-forming subunit of an ATP-permeable channel. In response to pathogen-derived and proinflammatory stimuli, relocates from intracellular compartments to NK-dendritic cell and NK-macrophage immune synapses where it mediates ATP efflux and NK cell activation involved in antimicrobial and antitumor responses (By similarity). May assemble to form gap junction channel-like structures with gating and ion conductance likely regulated by membrane lipids and voltage rather than by extracellular calcium levels (By similarity).</text>
</comment>
<comment type="catalytic activity">
    <reaction evidence="2">
        <text>ATP(in) = ATP(out)</text>
        <dbReference type="Rhea" id="RHEA:75687"/>
        <dbReference type="ChEBI" id="CHEBI:30616"/>
    </reaction>
    <physiologicalReaction direction="left-to-right" evidence="2">
        <dbReference type="Rhea" id="RHEA:75688"/>
    </physiologicalReaction>
</comment>
<comment type="subunit">
    <text evidence="1">Oligomerizes to form decameric and undecameric channels.</text>
</comment>
<comment type="subcellular location">
    <subcellularLocation>
        <location evidence="2">Cell membrane</location>
        <topology evidence="3">Multi-pass membrane protein</topology>
    </subcellularLocation>
    <text evidence="2">Recruited at immune synapses in response to pathogen-derived and proinflammatory stimuli.</text>
</comment>
<comment type="similarity">
    <text evidence="4">Belongs to the CALHM family.</text>
</comment>
<sequence length="315" mass="34730">MEKFKAVLDLQIKHRSALGYGLVTLLTAGGEKIFSTVVFQCPCTATLNLTYGLVFLLVPALALFLLGYALSARTWRLLTGCCSRSASTRSSSGLRSTLVCAQVSAVAALAPLTWVAVALLGGSFYQCAVSGSTRLASYLCKDRNHSCIAKLPQVPCNKQEAEMQEILSQLKAQSQVLGWVLIAAVIFLLLVFKCVSRCFSPVSYLQLKFWEIYLEKEKQILQSQAAEHATQLARENIRSFFECSKPKECNTPSRKDWQQISALYTFNSKNQFYSMLHKYVSRKEVSSSLHSVEGDVVVPVLGFVDDAAMANTHGV</sequence>
<feature type="chain" id="PRO_0000283783" description="Calcium homeostasis modulator protein 6">
    <location>
        <begin position="1"/>
        <end position="315"/>
    </location>
</feature>
<feature type="topological domain" description="Cytoplasmic" evidence="4">
    <location>
        <begin position="1"/>
        <end position="21"/>
    </location>
</feature>
<feature type="transmembrane region" description="Helical; Name=S1" evidence="1">
    <location>
        <begin position="22"/>
        <end position="37"/>
    </location>
</feature>
<feature type="topological domain" description="Extracellular" evidence="4">
    <location>
        <begin position="38"/>
        <end position="46"/>
    </location>
</feature>
<feature type="transmembrane region" description="Helical; Name=S2" evidence="1">
    <location>
        <begin position="47"/>
        <end position="68"/>
    </location>
</feature>
<feature type="topological domain" description="Cytoplasmic" evidence="4">
    <location>
        <begin position="69"/>
        <end position="103"/>
    </location>
</feature>
<feature type="transmembrane region" description="Helical; Name=S3" evidence="1">
    <location>
        <begin position="104"/>
        <end position="128"/>
    </location>
</feature>
<feature type="topological domain" description="Extracellular" evidence="4">
    <location>
        <begin position="129"/>
        <end position="169"/>
    </location>
</feature>
<feature type="transmembrane region" description="Helical; Name=S4" evidence="1">
    <location>
        <begin position="170"/>
        <end position="192"/>
    </location>
</feature>
<feature type="topological domain" description="Cytoplasmic" evidence="4">
    <location>
        <begin position="193"/>
        <end position="315"/>
    </location>
</feature>
<feature type="disulfide bond" evidence="1">
    <location>
        <begin position="41"/>
        <end position="127"/>
    </location>
</feature>
<feature type="disulfide bond" evidence="1">
    <location>
        <begin position="43"/>
        <end position="156"/>
    </location>
</feature>
<feature type="disulfide bond" evidence="1">
    <location>
        <begin position="140"/>
        <end position="147"/>
    </location>
</feature>
<dbReference type="EMBL" id="BC093379">
    <property type="protein sequence ID" value="AAH93379.1"/>
    <property type="molecule type" value="mRNA"/>
</dbReference>
<dbReference type="RefSeq" id="NP_001020147.1">
    <property type="nucleotide sequence ID" value="NM_001024976.1"/>
</dbReference>
<dbReference type="SMR" id="Q561R8"/>
<dbReference type="FunCoup" id="Q561R8">
    <property type="interactions" value="47"/>
</dbReference>
<dbReference type="STRING" id="10116.ENSRNOP00000054134"/>
<dbReference type="PhosphoSitePlus" id="Q561R8"/>
<dbReference type="PaxDb" id="10116-ENSRNOP00000054134"/>
<dbReference type="Ensembl" id="ENSRNOT00000057317.5">
    <property type="protein sequence ID" value="ENSRNOP00000054134.2"/>
    <property type="gene ID" value="ENSRNOG00000037757.5"/>
</dbReference>
<dbReference type="GeneID" id="294430"/>
<dbReference type="KEGG" id="rno:294430"/>
<dbReference type="UCSC" id="RGD:1304835">
    <property type="organism name" value="rat"/>
</dbReference>
<dbReference type="AGR" id="RGD:1304835"/>
<dbReference type="CTD" id="441168"/>
<dbReference type="RGD" id="1304835">
    <property type="gene designation" value="Calhm6"/>
</dbReference>
<dbReference type="eggNOG" id="ENOG502QSG7">
    <property type="taxonomic scope" value="Eukaryota"/>
</dbReference>
<dbReference type="GeneTree" id="ENSGT01030000234610"/>
<dbReference type="HOGENOM" id="CLU_069286_2_0_1"/>
<dbReference type="InParanoid" id="Q561R8"/>
<dbReference type="OMA" id="KFWKIYS"/>
<dbReference type="OrthoDB" id="5962981at2759"/>
<dbReference type="PhylomeDB" id="Q561R8"/>
<dbReference type="TreeFam" id="TF329085"/>
<dbReference type="PRO" id="PR:Q561R8"/>
<dbReference type="Proteomes" id="UP000002494">
    <property type="component" value="Chromosome 20"/>
</dbReference>
<dbReference type="Bgee" id="ENSRNOG00000037757">
    <property type="expression patterns" value="Expressed in spleen and 14 other cell types or tissues"/>
</dbReference>
<dbReference type="GO" id="GO:0001772">
    <property type="term" value="C:immunological synapse"/>
    <property type="evidence" value="ECO:0000266"/>
    <property type="project" value="RGD"/>
</dbReference>
<dbReference type="GO" id="GO:0005886">
    <property type="term" value="C:plasma membrane"/>
    <property type="evidence" value="ECO:0000318"/>
    <property type="project" value="GO_Central"/>
</dbReference>
<dbReference type="GO" id="GO:0005261">
    <property type="term" value="F:monoatomic cation channel activity"/>
    <property type="evidence" value="ECO:0000318"/>
    <property type="project" value="GO_Central"/>
</dbReference>
<dbReference type="GO" id="GO:0022832">
    <property type="term" value="F:voltage-gated channel activity"/>
    <property type="evidence" value="ECO:0000266"/>
    <property type="project" value="RGD"/>
</dbReference>
<dbReference type="GO" id="GO:1904669">
    <property type="term" value="P:ATP export"/>
    <property type="evidence" value="ECO:0000266"/>
    <property type="project" value="RGD"/>
</dbReference>
<dbReference type="GO" id="GO:0002727">
    <property type="term" value="P:regulation of natural killer cell cytokine production"/>
    <property type="evidence" value="ECO:0000266"/>
    <property type="project" value="RGD"/>
</dbReference>
<dbReference type="InterPro" id="IPR029569">
    <property type="entry name" value="CALHM"/>
</dbReference>
<dbReference type="PANTHER" id="PTHR32261">
    <property type="entry name" value="CALCIUM HOMEOSTASIS MODULATOR PROTEIN"/>
    <property type="match status" value="1"/>
</dbReference>
<dbReference type="PANTHER" id="PTHR32261:SF4">
    <property type="entry name" value="CALCIUM HOMEOSTASIS MODULATOR PROTEIN 6"/>
    <property type="match status" value="1"/>
</dbReference>
<dbReference type="Pfam" id="PF14798">
    <property type="entry name" value="Ca_hom_mod"/>
    <property type="match status" value="1"/>
</dbReference>
<accession>Q561R8</accession>
<protein>
    <recommendedName>
        <fullName>Calcium homeostasis modulator protein 6</fullName>
    </recommendedName>
    <alternativeName>
        <fullName>Protein FAM26F</fullName>
    </alternativeName>
</protein>
<gene>
    <name evidence="5" type="primary">Calhm6</name>
    <name type="synonym">Fam26f</name>
</gene>
<evidence type="ECO:0000250" key="1">
    <source>
        <dbReference type="UniProtKB" id="Q5R3K3"/>
    </source>
</evidence>
<evidence type="ECO:0000250" key="2">
    <source>
        <dbReference type="UniProtKB" id="Q8C9E8"/>
    </source>
</evidence>
<evidence type="ECO:0000255" key="3"/>
<evidence type="ECO:0000305" key="4"/>
<evidence type="ECO:0000312" key="5">
    <source>
        <dbReference type="RGD" id="1304835"/>
    </source>
</evidence>
<reference key="1">
    <citation type="journal article" date="2004" name="Genome Res.">
        <title>The status, quality, and expansion of the NIH full-length cDNA project: the Mammalian Gene Collection (MGC).</title>
        <authorList>
            <consortium name="The MGC Project Team"/>
        </authorList>
    </citation>
    <scope>NUCLEOTIDE SEQUENCE [LARGE SCALE MRNA]</scope>
    <source>
        <tissue>Thymus</tissue>
    </source>
</reference>
<reference key="2">
    <citation type="journal article" date="2012" name="Nat. Commun.">
        <title>Quantitative maps of protein phosphorylation sites across 14 different rat organs and tissues.</title>
        <authorList>
            <person name="Lundby A."/>
            <person name="Secher A."/>
            <person name="Lage K."/>
            <person name="Nordsborg N.B."/>
            <person name="Dmytriyev A."/>
            <person name="Lundby C."/>
            <person name="Olsen J.V."/>
        </authorList>
    </citation>
    <scope>IDENTIFICATION BY MASS SPECTROMETRY [LARGE SCALE ANALYSIS]</scope>
</reference>
<keyword id="KW-1003">Cell membrane</keyword>
<keyword id="KW-1015">Disulfide bond</keyword>
<keyword id="KW-0407">Ion channel</keyword>
<keyword id="KW-0406">Ion transport</keyword>
<keyword id="KW-0472">Membrane</keyword>
<keyword id="KW-1185">Reference proteome</keyword>
<keyword id="KW-0812">Transmembrane</keyword>
<keyword id="KW-1133">Transmembrane helix</keyword>
<keyword id="KW-0813">Transport</keyword>
<proteinExistence type="evidence at protein level"/>